<proteinExistence type="inferred from homology"/>
<sequence length="101" mass="11516">MAGQKIRIRLKAYDHEAIDASARKIVETVTRTGARVVGPVPLPTEKNVYCVIRSPHKYKDSREHFEMRTHKRLIDILEPTPKTVDALMRIDLPASVDVNIQ</sequence>
<comment type="function">
    <text evidence="1">Involved in the binding of tRNA to the ribosomes.</text>
</comment>
<comment type="subunit">
    <text evidence="1">Part of the 30S ribosomal subunit.</text>
</comment>
<comment type="similarity">
    <text evidence="1">Belongs to the universal ribosomal protein uS10 family.</text>
</comment>
<organism>
    <name type="scientific">Saccharopolyspora erythraea (strain ATCC 11635 / DSM 40517 / JCM 4748 / NBRC 13426 / NCIMB 8594 / NRRL 2338)</name>
    <dbReference type="NCBI Taxonomy" id="405948"/>
    <lineage>
        <taxon>Bacteria</taxon>
        <taxon>Bacillati</taxon>
        <taxon>Actinomycetota</taxon>
        <taxon>Actinomycetes</taxon>
        <taxon>Pseudonocardiales</taxon>
        <taxon>Pseudonocardiaceae</taxon>
        <taxon>Saccharopolyspora</taxon>
    </lineage>
</organism>
<evidence type="ECO:0000255" key="1">
    <source>
        <dbReference type="HAMAP-Rule" id="MF_00508"/>
    </source>
</evidence>
<evidence type="ECO:0000305" key="2"/>
<feature type="chain" id="PRO_1000015105" description="Small ribosomal subunit protein uS10">
    <location>
        <begin position="1"/>
        <end position="101"/>
    </location>
</feature>
<protein>
    <recommendedName>
        <fullName evidence="1">Small ribosomal subunit protein uS10</fullName>
    </recommendedName>
    <alternativeName>
        <fullName evidence="2">30S ribosomal protein S10</fullName>
    </alternativeName>
</protein>
<gene>
    <name evidence="1" type="primary">rpsJ</name>
    <name type="ordered locus">SACE_6837</name>
</gene>
<accession>A4FPM6</accession>
<reference key="1">
    <citation type="journal article" date="2007" name="Nat. Biotechnol.">
        <title>Complete genome sequence of the erythromycin-producing bacterium Saccharopolyspora erythraea NRRL23338.</title>
        <authorList>
            <person name="Oliynyk M."/>
            <person name="Samborskyy M."/>
            <person name="Lester J.B."/>
            <person name="Mironenko T."/>
            <person name="Scott N."/>
            <person name="Dickens S."/>
            <person name="Haydock S.F."/>
            <person name="Leadlay P.F."/>
        </authorList>
    </citation>
    <scope>NUCLEOTIDE SEQUENCE [LARGE SCALE GENOMIC DNA]</scope>
    <source>
        <strain>ATCC 11635 / DSM 40517 / JCM 4748 / NBRC 13426 / NCIMB 8594 / NRRL 2338</strain>
    </source>
</reference>
<keyword id="KW-1185">Reference proteome</keyword>
<keyword id="KW-0687">Ribonucleoprotein</keyword>
<keyword id="KW-0689">Ribosomal protein</keyword>
<dbReference type="EMBL" id="AM420293">
    <property type="protein sequence ID" value="CAM06001.1"/>
    <property type="molecule type" value="Genomic_DNA"/>
</dbReference>
<dbReference type="RefSeq" id="WP_009948626.1">
    <property type="nucleotide sequence ID" value="NZ_PDBV01000001.1"/>
</dbReference>
<dbReference type="SMR" id="A4FPM6"/>
<dbReference type="STRING" id="405948.SACE_6837"/>
<dbReference type="KEGG" id="sen:SACE_6837"/>
<dbReference type="eggNOG" id="COG0051">
    <property type="taxonomic scope" value="Bacteria"/>
</dbReference>
<dbReference type="HOGENOM" id="CLU_122625_1_3_11"/>
<dbReference type="OrthoDB" id="9804464at2"/>
<dbReference type="Proteomes" id="UP000006728">
    <property type="component" value="Chromosome"/>
</dbReference>
<dbReference type="GO" id="GO:1990904">
    <property type="term" value="C:ribonucleoprotein complex"/>
    <property type="evidence" value="ECO:0007669"/>
    <property type="project" value="UniProtKB-KW"/>
</dbReference>
<dbReference type="GO" id="GO:0005840">
    <property type="term" value="C:ribosome"/>
    <property type="evidence" value="ECO:0007669"/>
    <property type="project" value="UniProtKB-KW"/>
</dbReference>
<dbReference type="GO" id="GO:0003735">
    <property type="term" value="F:structural constituent of ribosome"/>
    <property type="evidence" value="ECO:0007669"/>
    <property type="project" value="InterPro"/>
</dbReference>
<dbReference type="GO" id="GO:0000049">
    <property type="term" value="F:tRNA binding"/>
    <property type="evidence" value="ECO:0007669"/>
    <property type="project" value="UniProtKB-UniRule"/>
</dbReference>
<dbReference type="GO" id="GO:0006412">
    <property type="term" value="P:translation"/>
    <property type="evidence" value="ECO:0007669"/>
    <property type="project" value="UniProtKB-UniRule"/>
</dbReference>
<dbReference type="FunFam" id="3.30.70.600:FF:000001">
    <property type="entry name" value="30S ribosomal protein S10"/>
    <property type="match status" value="1"/>
</dbReference>
<dbReference type="Gene3D" id="3.30.70.600">
    <property type="entry name" value="Ribosomal protein S10 domain"/>
    <property type="match status" value="1"/>
</dbReference>
<dbReference type="HAMAP" id="MF_00508">
    <property type="entry name" value="Ribosomal_uS10"/>
    <property type="match status" value="1"/>
</dbReference>
<dbReference type="InterPro" id="IPR001848">
    <property type="entry name" value="Ribosomal_uS10"/>
</dbReference>
<dbReference type="InterPro" id="IPR018268">
    <property type="entry name" value="Ribosomal_uS10_CS"/>
</dbReference>
<dbReference type="InterPro" id="IPR027486">
    <property type="entry name" value="Ribosomal_uS10_dom"/>
</dbReference>
<dbReference type="InterPro" id="IPR036838">
    <property type="entry name" value="Ribosomal_uS10_dom_sf"/>
</dbReference>
<dbReference type="NCBIfam" id="NF001861">
    <property type="entry name" value="PRK00596.1"/>
    <property type="match status" value="1"/>
</dbReference>
<dbReference type="NCBIfam" id="TIGR01049">
    <property type="entry name" value="rpsJ_bact"/>
    <property type="match status" value="1"/>
</dbReference>
<dbReference type="PANTHER" id="PTHR11700">
    <property type="entry name" value="30S RIBOSOMAL PROTEIN S10 FAMILY MEMBER"/>
    <property type="match status" value="1"/>
</dbReference>
<dbReference type="Pfam" id="PF00338">
    <property type="entry name" value="Ribosomal_S10"/>
    <property type="match status" value="1"/>
</dbReference>
<dbReference type="PRINTS" id="PR00971">
    <property type="entry name" value="RIBOSOMALS10"/>
</dbReference>
<dbReference type="SMART" id="SM01403">
    <property type="entry name" value="Ribosomal_S10"/>
    <property type="match status" value="1"/>
</dbReference>
<dbReference type="SUPFAM" id="SSF54999">
    <property type="entry name" value="Ribosomal protein S10"/>
    <property type="match status" value="1"/>
</dbReference>
<dbReference type="PROSITE" id="PS00361">
    <property type="entry name" value="RIBOSOMAL_S10"/>
    <property type="match status" value="1"/>
</dbReference>
<name>RS10_SACEN</name>